<organismHost>
    <name type="scientific">Felidae</name>
    <name type="common">cat family</name>
    <dbReference type="NCBI Taxonomy" id="9681"/>
</organismHost>
<reference key="1">
    <citation type="journal article" date="1990" name="J. Virol.">
        <title>Comparison of two host cell range variants of feline immunodeficiency virus.</title>
        <authorList>
            <person name="Phillips T.R."/>
            <person name="Talbott R.L."/>
            <person name="Lamont C."/>
            <person name="Muir S."/>
            <person name="Lovelace K.M."/>
            <person name="Elder J.H."/>
        </authorList>
    </citation>
    <scope>NUCLEOTIDE SEQUENCE [GENOMIC RNA]</scope>
    <source>
        <strain>Isolate PPR</strain>
    </source>
</reference>
<feature type="chain" id="PRO_0000085501" description="Virion infectivity factor">
    <location>
        <begin position="1"/>
        <end position="251"/>
    </location>
</feature>
<accession>P19029</accession>
<comment type="function">
    <text>Determines virus infectivity.</text>
</comment>
<comment type="subcellular location">
    <subcellularLocation>
        <location evidence="1">Host cytoplasm</location>
    </subcellularLocation>
    <subcellularLocation>
        <location evidence="1">Virion</location>
    </subcellularLocation>
</comment>
<comment type="similarity">
    <text evidence="2">Belongs to the feline lentivirus group Vif protein family.</text>
</comment>
<proteinExistence type="inferred from homology"/>
<evidence type="ECO:0000250" key="1"/>
<evidence type="ECO:0000305" key="2"/>
<gene>
    <name type="primary">vif</name>
</gene>
<dbReference type="EMBL" id="M36968">
    <property type="protein sequence ID" value="AAA43077.1"/>
    <property type="molecule type" value="Genomic_RNA"/>
</dbReference>
<dbReference type="SMR" id="P19029"/>
<dbReference type="GO" id="GO:0030430">
    <property type="term" value="C:host cell cytoplasm"/>
    <property type="evidence" value="ECO:0007669"/>
    <property type="project" value="UniProtKB-SubCell"/>
</dbReference>
<dbReference type="GO" id="GO:0044423">
    <property type="term" value="C:virion component"/>
    <property type="evidence" value="ECO:0007669"/>
    <property type="project" value="UniProtKB-KW"/>
</dbReference>
<dbReference type="GO" id="GO:0019058">
    <property type="term" value="P:viral life cycle"/>
    <property type="evidence" value="ECO:0007669"/>
    <property type="project" value="InterPro"/>
</dbReference>
<dbReference type="InterPro" id="IPR008668">
    <property type="entry name" value="Vir_infectivity_fact_Lentivir"/>
</dbReference>
<dbReference type="Pfam" id="PF05851">
    <property type="entry name" value="Lentivirus_VIF"/>
    <property type="match status" value="1"/>
</dbReference>
<organism>
    <name type="scientific">Feline immunodeficiency virus (strain San Diego)</name>
    <name type="common">FIV</name>
    <dbReference type="NCBI Taxonomy" id="11675"/>
    <lineage>
        <taxon>Viruses</taxon>
        <taxon>Riboviria</taxon>
        <taxon>Pararnavirae</taxon>
        <taxon>Artverviricota</taxon>
        <taxon>Revtraviricetes</taxon>
        <taxon>Ortervirales</taxon>
        <taxon>Retroviridae</taxon>
        <taxon>Orthoretrovirinae</taxon>
        <taxon>Lentivirus</taxon>
        <taxon>Feline immunodeficiency virus</taxon>
    </lineage>
</organism>
<keyword id="KW-1035">Host cytoplasm</keyword>
<keyword id="KW-0946">Virion</keyword>
<name>VIF_FIVSD</name>
<protein>
    <recommendedName>
        <fullName>Virion infectivity factor</fullName>
    </recommendedName>
</protein>
<sequence length="251" mass="29171">MSDEDWQVSRRLFAVLQGGVYNAMLYISRLPQDEREKYKKDFKKRLLDTETGFIKRLRKAEGIKWSFHTRDYHVGYVREMVAGPTTPHSLRLYVYISNPLWHSQYRPGLVNFNKEWPFVNLWIKTGFMWDDIEKQNICIGGEVSPGWGPGMIGIAIKAFSCGERKIEATPVMIIRGEINPKKWCGDCWNLMCLRNSPPETLQRLAMLACGVQAKSWRGCCNQRFVSPYRTPADLEVIQSKPGWCMLWRGKL</sequence>